<protein>
    <recommendedName>
        <fullName evidence="3">Viridiflorene synthase</fullName>
        <ecNumber evidence="2">4.2.3.88</ecNumber>
    </recommendedName>
    <alternativeName>
        <fullName evidence="3">Terpene synthase 32</fullName>
        <shortName evidence="3">SlTPS32</shortName>
        <ecNumber evidence="4">4.2.3.-</ecNumber>
    </alternativeName>
</protein>
<feature type="chain" id="PRO_0000434412" description="Viridiflorene synthase">
    <location>
        <begin position="1"/>
        <end position="548"/>
    </location>
</feature>
<feature type="short sequence motif" description="DDXXD motif" evidence="4">
    <location>
        <begin position="301"/>
        <end position="305"/>
    </location>
</feature>
<feature type="binding site" evidence="1">
    <location>
        <position position="301"/>
    </location>
    <ligand>
        <name>Mg(2+)</name>
        <dbReference type="ChEBI" id="CHEBI:18420"/>
        <label>1</label>
    </ligand>
</feature>
<feature type="binding site" evidence="1">
    <location>
        <position position="301"/>
    </location>
    <ligand>
        <name>Mg(2+)</name>
        <dbReference type="ChEBI" id="CHEBI:18420"/>
        <label>2</label>
    </ligand>
</feature>
<feature type="binding site" evidence="1">
    <location>
        <position position="305"/>
    </location>
    <ligand>
        <name>Mg(2+)</name>
        <dbReference type="ChEBI" id="CHEBI:18420"/>
        <label>1</label>
    </ligand>
</feature>
<feature type="binding site" evidence="1">
    <location>
        <position position="305"/>
    </location>
    <ligand>
        <name>Mg(2+)</name>
        <dbReference type="ChEBI" id="CHEBI:18420"/>
        <label>2</label>
    </ligand>
</feature>
<feature type="binding site" evidence="1">
    <location>
        <position position="444"/>
    </location>
    <ligand>
        <name>Mg(2+)</name>
        <dbReference type="ChEBI" id="CHEBI:18420"/>
        <label>3</label>
    </ligand>
</feature>
<feature type="binding site" evidence="1">
    <location>
        <position position="448"/>
    </location>
    <ligand>
        <name>Mg(2+)</name>
        <dbReference type="ChEBI" id="CHEBI:18420"/>
        <label>3</label>
    </ligand>
</feature>
<feature type="binding site" evidence="1">
    <location>
        <position position="452"/>
    </location>
    <ligand>
        <name>Mg(2+)</name>
        <dbReference type="ChEBI" id="CHEBI:18420"/>
        <label>3</label>
    </ligand>
</feature>
<evidence type="ECO:0000250" key="1">
    <source>
        <dbReference type="UniProtKB" id="Q40577"/>
    </source>
</evidence>
<evidence type="ECO:0000269" key="2">
    <source>
    </source>
</evidence>
<evidence type="ECO:0000303" key="3">
    <source>
    </source>
</evidence>
<evidence type="ECO:0000305" key="4"/>
<evidence type="ECO:0000312" key="5">
    <source>
        <dbReference type="Proteomes" id="UP000004994"/>
    </source>
</evidence>
<gene>
    <name evidence="3" type="primary">TPS32</name>
    <name evidence="4" type="ordered locus">Solyc01g101180</name>
</gene>
<comment type="function">
    <text evidence="2">Sesquiterpene synthase involved in the production of viridiflorene from (E,E)-farnesyl diphosphate. Can also use (Z,Z)-FPP to make several unidentified sesquiterpenes.</text>
</comment>
<comment type="catalytic activity">
    <reaction evidence="2">
        <text>(2E,6E)-farnesyl diphosphate = viridiflorene + diphosphate</text>
        <dbReference type="Rhea" id="RHEA:31811"/>
        <dbReference type="ChEBI" id="CHEBI:33019"/>
        <dbReference type="ChEBI" id="CHEBI:63444"/>
        <dbReference type="ChEBI" id="CHEBI:175763"/>
        <dbReference type="EC" id="4.2.3.88"/>
    </reaction>
</comment>
<comment type="cofactor">
    <cofactor evidence="1">
        <name>Mg(2+)</name>
        <dbReference type="ChEBI" id="CHEBI:18420"/>
    </cofactor>
    <text evidence="1">Binds 3 Mg(2+) ions per subunit.</text>
</comment>
<comment type="pathway">
    <text>Secondary metabolite biosynthesis; terpenoid biosynthesis.</text>
</comment>
<comment type="subcellular location">
    <subcellularLocation>
        <location evidence="4">Cytoplasm</location>
    </subcellularLocation>
</comment>
<comment type="tissue specificity">
    <text evidence="2">Expressed in stem and leaf trichomes. Detected in roots, fruits and flowers.</text>
</comment>
<comment type="domain">
    <text evidence="1">The Asp-Asp-Xaa-Xaa-Asp/Glu (DDXXD/E) motif is important for the catalytic activity, presumably through binding to Mg(2+).</text>
</comment>
<comment type="similarity">
    <text evidence="4">Belongs to the terpene synthase family. Tpsa subfamily.</text>
</comment>
<sequence length="548" mass="63367">MALLNNQDEIVRPVANFSPSLWGDRFHSFSLDNQVADKYAQQIETLKEQTRSLLSDAACGTTLAEKLNLIDIVERLGLAYHFEKQIEDMLDQIYKADPNFEAHDLNTLSLQFRILRQHGYNISQKIFSRFQDANGKFKESLSNDIKGLLNLYEASHVRTHGEDILEEALAFSTAHLESAAPHLKSPLSKQVTHALEQSLHKSIPRVETRYFISIYEEEEFKNDVLLRFAKLDYNLLQMLHKQELSEVSRWWKDLDFVTTLPYARDRAVECYFWTMGVYAEPQYSQARVMLAKTIAMISIVDDTFDAYGIVKELEVYTDAIQRWDISQMDRLPEYMKVSFKALLDLYEDYEKELSKDGRSDVVQYAKERMKEIVRNYFVEAKWFIEGYMPPVSEYLSNALATSTYYLLTTTSYLGVKSATKEDFEWLAKNPKILEANVTLCRVVDDIATYEVEKGRGQIATGIECYMRDYGVSTQVAMDKFQEMAEIAWKDVNEGILRPTPVSTEILTRILNLARIIDVTYKHNQDGYTHPEKVLKPHIIALLVDSIEI</sequence>
<dbReference type="EC" id="4.2.3.88" evidence="2"/>
<dbReference type="EC" id="4.2.3.-" evidence="4"/>
<dbReference type="EMBL" id="JN412081">
    <property type="protein sequence ID" value="AEP82773.1"/>
    <property type="molecule type" value="Genomic_DNA"/>
</dbReference>
<dbReference type="RefSeq" id="NP_001308023.1">
    <property type="nucleotide sequence ID" value="NM_001321094.1"/>
</dbReference>
<dbReference type="SMR" id="G5CV45"/>
<dbReference type="FunCoup" id="G5CV45">
    <property type="interactions" value="20"/>
</dbReference>
<dbReference type="STRING" id="4081.G5CV45"/>
<dbReference type="PaxDb" id="4081-Solyc01g101180.2.1"/>
<dbReference type="GeneID" id="101264071"/>
<dbReference type="KEGG" id="sly:101264071"/>
<dbReference type="eggNOG" id="ENOG502QUCN">
    <property type="taxonomic scope" value="Eukaryota"/>
</dbReference>
<dbReference type="HOGENOM" id="CLU_003125_7_2_1"/>
<dbReference type="InParanoid" id="G5CV45"/>
<dbReference type="OrthoDB" id="1877784at2759"/>
<dbReference type="PhylomeDB" id="G5CV45"/>
<dbReference type="UniPathway" id="UPA00213"/>
<dbReference type="Proteomes" id="UP000004994">
    <property type="component" value="Unplaced"/>
</dbReference>
<dbReference type="GO" id="GO:0005737">
    <property type="term" value="C:cytoplasm"/>
    <property type="evidence" value="ECO:0007669"/>
    <property type="project" value="UniProtKB-SubCell"/>
</dbReference>
<dbReference type="GO" id="GO:0016838">
    <property type="term" value="F:carbon-oxygen lyase activity, acting on phosphates"/>
    <property type="evidence" value="ECO:0000314"/>
    <property type="project" value="UniProtKB"/>
</dbReference>
<dbReference type="GO" id="GO:0000287">
    <property type="term" value="F:magnesium ion binding"/>
    <property type="evidence" value="ECO:0007669"/>
    <property type="project" value="InterPro"/>
</dbReference>
<dbReference type="GO" id="GO:0010334">
    <property type="term" value="F:sesquiterpene synthase activity"/>
    <property type="evidence" value="ECO:0000314"/>
    <property type="project" value="UniProtKB"/>
</dbReference>
<dbReference type="GO" id="GO:0016102">
    <property type="term" value="P:diterpenoid biosynthetic process"/>
    <property type="evidence" value="ECO:0007669"/>
    <property type="project" value="InterPro"/>
</dbReference>
<dbReference type="GO" id="GO:0045339">
    <property type="term" value="P:farnesyl diphosphate catabolic process"/>
    <property type="evidence" value="ECO:0000314"/>
    <property type="project" value="UniProtKB"/>
</dbReference>
<dbReference type="GO" id="GO:0051762">
    <property type="term" value="P:sesquiterpene biosynthetic process"/>
    <property type="evidence" value="ECO:0000314"/>
    <property type="project" value="UniProtKB"/>
</dbReference>
<dbReference type="CDD" id="cd00684">
    <property type="entry name" value="Terpene_cyclase_plant_C1"/>
    <property type="match status" value="1"/>
</dbReference>
<dbReference type="FunFam" id="1.10.600.10:FF:000007">
    <property type="entry name" value="Isoprene synthase, chloroplastic"/>
    <property type="match status" value="1"/>
</dbReference>
<dbReference type="FunFam" id="1.50.10.130:FF:000001">
    <property type="entry name" value="Isoprene synthase, chloroplastic"/>
    <property type="match status" value="1"/>
</dbReference>
<dbReference type="Gene3D" id="1.10.600.10">
    <property type="entry name" value="Farnesyl Diphosphate Synthase"/>
    <property type="match status" value="1"/>
</dbReference>
<dbReference type="Gene3D" id="1.50.10.130">
    <property type="entry name" value="Terpene synthase, N-terminal domain"/>
    <property type="match status" value="1"/>
</dbReference>
<dbReference type="InterPro" id="IPR008949">
    <property type="entry name" value="Isoprenoid_synthase_dom_sf"/>
</dbReference>
<dbReference type="InterPro" id="IPR034741">
    <property type="entry name" value="Terpene_cyclase-like_1_C"/>
</dbReference>
<dbReference type="InterPro" id="IPR044814">
    <property type="entry name" value="Terpene_cyclase_plant_C1"/>
</dbReference>
<dbReference type="InterPro" id="IPR001906">
    <property type="entry name" value="Terpene_synth_N"/>
</dbReference>
<dbReference type="InterPro" id="IPR036965">
    <property type="entry name" value="Terpene_synth_N_sf"/>
</dbReference>
<dbReference type="InterPro" id="IPR050148">
    <property type="entry name" value="Terpene_synthase-like"/>
</dbReference>
<dbReference type="InterPro" id="IPR005630">
    <property type="entry name" value="Terpene_synthase_metal-bd"/>
</dbReference>
<dbReference type="InterPro" id="IPR008930">
    <property type="entry name" value="Terpenoid_cyclase/PrenylTrfase"/>
</dbReference>
<dbReference type="PANTHER" id="PTHR31225">
    <property type="entry name" value="OS04G0344100 PROTEIN-RELATED"/>
    <property type="match status" value="1"/>
</dbReference>
<dbReference type="PANTHER" id="PTHR31225:SF208">
    <property type="entry name" value="VIRIDIFLORENE SYNTHASE"/>
    <property type="match status" value="1"/>
</dbReference>
<dbReference type="Pfam" id="PF01397">
    <property type="entry name" value="Terpene_synth"/>
    <property type="match status" value="1"/>
</dbReference>
<dbReference type="Pfam" id="PF03936">
    <property type="entry name" value="Terpene_synth_C"/>
    <property type="match status" value="1"/>
</dbReference>
<dbReference type="SFLD" id="SFLDG01019">
    <property type="entry name" value="Terpene_Cyclase_Like_1_C_Termi"/>
    <property type="match status" value="1"/>
</dbReference>
<dbReference type="SFLD" id="SFLDG01604">
    <property type="entry name" value="Terpene_Cyclase_Like_1_C_Termi"/>
    <property type="match status" value="1"/>
</dbReference>
<dbReference type="SFLD" id="SFLDG01014">
    <property type="entry name" value="Terpene_Cyclase_Like_1_N-term"/>
    <property type="match status" value="1"/>
</dbReference>
<dbReference type="SUPFAM" id="SSF48239">
    <property type="entry name" value="Terpenoid cyclases/Protein prenyltransferases"/>
    <property type="match status" value="1"/>
</dbReference>
<dbReference type="SUPFAM" id="SSF48576">
    <property type="entry name" value="Terpenoid synthases"/>
    <property type="match status" value="1"/>
</dbReference>
<organism evidence="5">
    <name type="scientific">Solanum lycopersicum</name>
    <name type="common">Tomato</name>
    <name type="synonym">Lycopersicon esculentum</name>
    <dbReference type="NCBI Taxonomy" id="4081"/>
    <lineage>
        <taxon>Eukaryota</taxon>
        <taxon>Viridiplantae</taxon>
        <taxon>Streptophyta</taxon>
        <taxon>Embryophyta</taxon>
        <taxon>Tracheophyta</taxon>
        <taxon>Spermatophyta</taxon>
        <taxon>Magnoliopsida</taxon>
        <taxon>eudicotyledons</taxon>
        <taxon>Gunneridae</taxon>
        <taxon>Pentapetalae</taxon>
        <taxon>asterids</taxon>
        <taxon>lamiids</taxon>
        <taxon>Solanales</taxon>
        <taxon>Solanaceae</taxon>
        <taxon>Solanoideae</taxon>
        <taxon>Solaneae</taxon>
        <taxon>Solanum</taxon>
        <taxon>Solanum subgen. Lycopersicon</taxon>
    </lineage>
</organism>
<keyword id="KW-0963">Cytoplasm</keyword>
<keyword id="KW-0456">Lyase</keyword>
<keyword id="KW-0460">Magnesium</keyword>
<keyword id="KW-0479">Metal-binding</keyword>
<keyword id="KW-1185">Reference proteome</keyword>
<reference key="1">
    <citation type="journal article" date="2011" name="Plant Physiol.">
        <title>The tomato terpene synthase gene family.</title>
        <authorList>
            <person name="Falara V."/>
            <person name="Akhtar T.A."/>
            <person name="Nguyen T.T.H."/>
            <person name="Spyropoulou E.A."/>
            <person name="Bleeker P.M."/>
            <person name="Schauvinhold I."/>
            <person name="Matsuba Y."/>
            <person name="Bonini M.E."/>
            <person name="Schilmiller A.L."/>
            <person name="Last R.L."/>
            <person name="Schuurink R.C."/>
            <person name="Pichersky E."/>
        </authorList>
    </citation>
    <scope>NUCLEOTIDE SEQUENCE [GENOMIC DNA]</scope>
    <scope>FUNCTION</scope>
    <scope>CATALYTIC ACTIVITY</scope>
    <scope>TISSUE SPECIFICITY</scope>
</reference>
<reference key="2">
    <citation type="journal article" date="2012" name="Nature">
        <title>The tomato genome sequence provides insights into fleshy fruit evolution.</title>
        <authorList>
            <consortium name="Tomato Genome Consortium"/>
        </authorList>
    </citation>
    <scope>NUCLEOTIDE SEQUENCE [LARGE SCALE GENOMIC DNA]</scope>
    <source>
        <strain>cv. Heinz 1706</strain>
    </source>
</reference>
<name>TPS32_SOLLC</name>
<accession>G5CV45</accession>
<proteinExistence type="evidence at protein level"/>